<evidence type="ECO:0000255" key="1">
    <source>
        <dbReference type="HAMAP-Rule" id="MF_01322"/>
    </source>
</evidence>
<name>RPOC_SACEN</name>
<protein>
    <recommendedName>
        <fullName evidence="1">DNA-directed RNA polymerase subunit beta'</fullName>
        <shortName evidence="1">RNAP subunit beta'</shortName>
        <ecNumber evidence="1">2.7.7.6</ecNumber>
    </recommendedName>
    <alternativeName>
        <fullName evidence="1">RNA polymerase subunit beta'</fullName>
    </alternativeName>
    <alternativeName>
        <fullName evidence="1">Transcriptase subunit beta'</fullName>
    </alternativeName>
</protein>
<proteinExistence type="inferred from homology"/>
<keyword id="KW-0240">DNA-directed RNA polymerase</keyword>
<keyword id="KW-0460">Magnesium</keyword>
<keyword id="KW-0479">Metal-binding</keyword>
<keyword id="KW-0548">Nucleotidyltransferase</keyword>
<keyword id="KW-1185">Reference proteome</keyword>
<keyword id="KW-0804">Transcription</keyword>
<keyword id="KW-0808">Transferase</keyword>
<keyword id="KW-0862">Zinc</keyword>
<comment type="function">
    <text evidence="1">DNA-dependent RNA polymerase catalyzes the transcription of DNA into RNA using the four ribonucleoside triphosphates as substrates.</text>
</comment>
<comment type="catalytic activity">
    <reaction evidence="1">
        <text>RNA(n) + a ribonucleoside 5'-triphosphate = RNA(n+1) + diphosphate</text>
        <dbReference type="Rhea" id="RHEA:21248"/>
        <dbReference type="Rhea" id="RHEA-COMP:14527"/>
        <dbReference type="Rhea" id="RHEA-COMP:17342"/>
        <dbReference type="ChEBI" id="CHEBI:33019"/>
        <dbReference type="ChEBI" id="CHEBI:61557"/>
        <dbReference type="ChEBI" id="CHEBI:140395"/>
        <dbReference type="EC" id="2.7.7.6"/>
    </reaction>
</comment>
<comment type="cofactor">
    <cofactor evidence="1">
        <name>Mg(2+)</name>
        <dbReference type="ChEBI" id="CHEBI:18420"/>
    </cofactor>
    <text evidence="1">Binds 1 Mg(2+) ion per subunit.</text>
</comment>
<comment type="cofactor">
    <cofactor evidence="1">
        <name>Zn(2+)</name>
        <dbReference type="ChEBI" id="CHEBI:29105"/>
    </cofactor>
    <text evidence="1">Binds 2 Zn(2+) ions per subunit.</text>
</comment>
<comment type="subunit">
    <text evidence="1">The RNAP catalytic core consists of 2 alpha, 1 beta, 1 beta' and 1 omega subunit. When a sigma factor is associated with the core the holoenzyme is formed, which can initiate transcription.</text>
</comment>
<comment type="similarity">
    <text evidence="1">Belongs to the RNA polymerase beta' chain family.</text>
</comment>
<organism>
    <name type="scientific">Saccharopolyspora erythraea (strain ATCC 11635 / DSM 40517 / JCM 4748 / NBRC 13426 / NCIMB 8594 / NRRL 2338)</name>
    <dbReference type="NCBI Taxonomy" id="405948"/>
    <lineage>
        <taxon>Bacteria</taxon>
        <taxon>Bacillati</taxon>
        <taxon>Actinomycetota</taxon>
        <taxon>Actinomycetes</taxon>
        <taxon>Pseudonocardiales</taxon>
        <taxon>Pseudonocardiaceae</taxon>
        <taxon>Saccharopolyspora</taxon>
    </lineage>
</organism>
<sequence length="1303" mass="144955">MLDVNFFDELRIGLATADDIRQWSYGEVKKPETINYRTLKPEKDGLFCEKIFGPTRDWECYCGKYKRVRFKGIICERCGVEVTRAKVRRERMGHIELAASVTHIWYFKGVPSRLGYLLDLAPKDLEKIIYFAAYVITSVNTEMRHNEMSTLEAEIGVERKQIADQRDADLEARAQKLEADLAELEQEGAKSDVRRKVKEGGEREMRQLRDRAQRELDKLDEIWETFTKLEPRQLIADELLYRELYDRFGEYFTGGMGAESIQALLQDFDINAEADQLRETIRSGKGQKKLRALKRLKVVAAFQATGNNPSGMVLNCVPVIPPDLRPMVQLDGGRFATSDLNDLYRRVINRNNRLKRLIDLGAPEIIVNNEKRMLQESVDALFDNGRRGRPVTGPGNRPLKSLSDLLKGKQGRFRQNLLGKRVDYSGRSVIVVGPQLKLHQCGLPKEMAVELFKPFVMKRLVDLNHAQNIKSAKRMVERQRPQVWDVLEEVIAEHPVLLNRAPTLHRLGIQAFEPQLVEGKAIQLHPLVCEAFNADFDGDQMAVHLPLSAEAQAEARILMLSSNNILSPASGRPLAMPRLDMVTGLYHLTRQLDGAKGEGQSFSSVGEAIMAFDRGGLDLQAKVKIRVRDLVPNAEQRPEDWEPGQPWLAETTLGRVWFNELLPEDYPFVNDLLPKKRQAAIVNDLAERYPMVTVAQTLDKLKDAGFHWATRSGVTVSISDVVVPPNKTEILDGYEAKADQVEKRYRRGALSYQERNAELVKVWTAAKDEVAEAMEANFPEDNSISMIVKSGAAGNMTQVVQLAGMRGLVSNPKGEYIPRPIKANFREGLSVLEYFISNHGARKGLADTALRTADSGYLTRRLVDVSQDVIVRETDCGTERGIRMPIAEKLPDGKLLRDAHVETSVYARTTAEDVTDSDGNVVLARGSDLGDPAIEKLLAAGVTKVKVRSVLTCESGVGVCAVCYGRSMATGKLVDVGEAVGIVAAQSIGEPGTQLTMRTFHQGGVAGDDITTGLPRVQELFEARVPKGKAPIADAPGRIRMEDNDRYWKITIIPDDGSEEIVYDKLSKRQRLAAISVDGTERQITDGDHVDVGQQLLEGAVDPHEVLRVMGPREAQLHLVREVQEVYRSQGVGIHDKHVEVIVRQMLRRVIIIDSGATEFLPGSPVERSQFEGENRRVVAEGGDPASGRPVLMGITKASLATESWLSAASFQETTRILTNAAIEGASDKLVGLKENVIIGKLIPAGTGINRYRNIQVQPTEEARAAAYAIPSYDDGYYTPDVFGTGTGAAVPLDDYDFGRDYR</sequence>
<feature type="chain" id="PRO_0000308878" description="DNA-directed RNA polymerase subunit beta'">
    <location>
        <begin position="1"/>
        <end position="1303"/>
    </location>
</feature>
<feature type="binding site" evidence="1">
    <location>
        <position position="60"/>
    </location>
    <ligand>
        <name>Zn(2+)</name>
        <dbReference type="ChEBI" id="CHEBI:29105"/>
        <label>1</label>
    </ligand>
</feature>
<feature type="binding site" evidence="1">
    <location>
        <position position="62"/>
    </location>
    <ligand>
        <name>Zn(2+)</name>
        <dbReference type="ChEBI" id="CHEBI:29105"/>
        <label>1</label>
    </ligand>
</feature>
<feature type="binding site" evidence="1">
    <location>
        <position position="75"/>
    </location>
    <ligand>
        <name>Zn(2+)</name>
        <dbReference type="ChEBI" id="CHEBI:29105"/>
        <label>1</label>
    </ligand>
</feature>
<feature type="binding site" evidence="1">
    <location>
        <position position="78"/>
    </location>
    <ligand>
        <name>Zn(2+)</name>
        <dbReference type="ChEBI" id="CHEBI:29105"/>
        <label>1</label>
    </ligand>
</feature>
<feature type="binding site" evidence="1">
    <location>
        <position position="535"/>
    </location>
    <ligand>
        <name>Mg(2+)</name>
        <dbReference type="ChEBI" id="CHEBI:18420"/>
    </ligand>
</feature>
<feature type="binding site" evidence="1">
    <location>
        <position position="537"/>
    </location>
    <ligand>
        <name>Mg(2+)</name>
        <dbReference type="ChEBI" id="CHEBI:18420"/>
    </ligand>
</feature>
<feature type="binding site" evidence="1">
    <location>
        <position position="539"/>
    </location>
    <ligand>
        <name>Mg(2+)</name>
        <dbReference type="ChEBI" id="CHEBI:18420"/>
    </ligand>
</feature>
<feature type="binding site" evidence="1">
    <location>
        <position position="876"/>
    </location>
    <ligand>
        <name>Zn(2+)</name>
        <dbReference type="ChEBI" id="CHEBI:29105"/>
        <label>2</label>
    </ligand>
</feature>
<feature type="binding site" evidence="1">
    <location>
        <position position="953"/>
    </location>
    <ligand>
        <name>Zn(2+)</name>
        <dbReference type="ChEBI" id="CHEBI:29105"/>
        <label>2</label>
    </ligand>
</feature>
<feature type="binding site" evidence="1">
    <location>
        <position position="960"/>
    </location>
    <ligand>
        <name>Zn(2+)</name>
        <dbReference type="ChEBI" id="CHEBI:29105"/>
        <label>2</label>
    </ligand>
</feature>
<feature type="binding site" evidence="1">
    <location>
        <position position="963"/>
    </location>
    <ligand>
        <name>Zn(2+)</name>
        <dbReference type="ChEBI" id="CHEBI:29105"/>
        <label>2</label>
    </ligand>
</feature>
<gene>
    <name evidence="1" type="primary">rpoC</name>
    <name type="ordered locus">SACE_6853</name>
</gene>
<dbReference type="EC" id="2.7.7.6" evidence="1"/>
<dbReference type="EMBL" id="AM420293">
    <property type="protein sequence ID" value="CAM06017.1"/>
    <property type="molecule type" value="Genomic_DNA"/>
</dbReference>
<dbReference type="RefSeq" id="WP_009944110.1">
    <property type="nucleotide sequence ID" value="NC_009142.1"/>
</dbReference>
<dbReference type="SMR" id="A4FPP2"/>
<dbReference type="STRING" id="405948.SACE_6853"/>
<dbReference type="KEGG" id="sen:SACE_6853"/>
<dbReference type="eggNOG" id="COG0086">
    <property type="taxonomic scope" value="Bacteria"/>
</dbReference>
<dbReference type="HOGENOM" id="CLU_000524_3_0_11"/>
<dbReference type="OrthoDB" id="9815296at2"/>
<dbReference type="Proteomes" id="UP000006728">
    <property type="component" value="Chromosome"/>
</dbReference>
<dbReference type="GO" id="GO:0000428">
    <property type="term" value="C:DNA-directed RNA polymerase complex"/>
    <property type="evidence" value="ECO:0007669"/>
    <property type="project" value="UniProtKB-KW"/>
</dbReference>
<dbReference type="GO" id="GO:0003677">
    <property type="term" value="F:DNA binding"/>
    <property type="evidence" value="ECO:0007669"/>
    <property type="project" value="UniProtKB-UniRule"/>
</dbReference>
<dbReference type="GO" id="GO:0003899">
    <property type="term" value="F:DNA-directed RNA polymerase activity"/>
    <property type="evidence" value="ECO:0007669"/>
    <property type="project" value="UniProtKB-UniRule"/>
</dbReference>
<dbReference type="GO" id="GO:0000287">
    <property type="term" value="F:magnesium ion binding"/>
    <property type="evidence" value="ECO:0007669"/>
    <property type="project" value="UniProtKB-UniRule"/>
</dbReference>
<dbReference type="GO" id="GO:0008270">
    <property type="term" value="F:zinc ion binding"/>
    <property type="evidence" value="ECO:0007669"/>
    <property type="project" value="UniProtKB-UniRule"/>
</dbReference>
<dbReference type="GO" id="GO:0006351">
    <property type="term" value="P:DNA-templated transcription"/>
    <property type="evidence" value="ECO:0007669"/>
    <property type="project" value="UniProtKB-UniRule"/>
</dbReference>
<dbReference type="CDD" id="cd02655">
    <property type="entry name" value="RNAP_beta'_C"/>
    <property type="match status" value="1"/>
</dbReference>
<dbReference type="CDD" id="cd01609">
    <property type="entry name" value="RNAP_beta'_N"/>
    <property type="match status" value="1"/>
</dbReference>
<dbReference type="FunFam" id="1.10.150.390:FF:000002">
    <property type="entry name" value="DNA-directed RNA polymerase subunit beta"/>
    <property type="match status" value="1"/>
</dbReference>
<dbReference type="FunFam" id="1.10.40.90:FF:000001">
    <property type="entry name" value="DNA-directed RNA polymerase subunit beta"/>
    <property type="match status" value="1"/>
</dbReference>
<dbReference type="FunFam" id="4.10.860.120:FF:000001">
    <property type="entry name" value="DNA-directed RNA polymerase subunit beta"/>
    <property type="match status" value="1"/>
</dbReference>
<dbReference type="Gene3D" id="1.10.132.30">
    <property type="match status" value="1"/>
</dbReference>
<dbReference type="Gene3D" id="1.10.150.390">
    <property type="match status" value="1"/>
</dbReference>
<dbReference type="Gene3D" id="1.10.1790.20">
    <property type="match status" value="1"/>
</dbReference>
<dbReference type="Gene3D" id="1.10.40.90">
    <property type="match status" value="1"/>
</dbReference>
<dbReference type="Gene3D" id="2.40.40.20">
    <property type="match status" value="1"/>
</dbReference>
<dbReference type="Gene3D" id="2.40.50.100">
    <property type="match status" value="1"/>
</dbReference>
<dbReference type="Gene3D" id="4.10.860.120">
    <property type="entry name" value="RNA polymerase II, clamp domain"/>
    <property type="match status" value="1"/>
</dbReference>
<dbReference type="Gene3D" id="1.10.274.100">
    <property type="entry name" value="RNA polymerase Rpb1, domain 3"/>
    <property type="match status" value="1"/>
</dbReference>
<dbReference type="HAMAP" id="MF_01322">
    <property type="entry name" value="RNApol_bact_RpoC"/>
    <property type="match status" value="1"/>
</dbReference>
<dbReference type="InterPro" id="IPR045867">
    <property type="entry name" value="DNA-dir_RpoC_beta_prime"/>
</dbReference>
<dbReference type="InterPro" id="IPR012754">
    <property type="entry name" value="DNA-dir_RpoC_beta_prime_bact"/>
</dbReference>
<dbReference type="InterPro" id="IPR000722">
    <property type="entry name" value="RNA_pol_asu"/>
</dbReference>
<dbReference type="InterPro" id="IPR006592">
    <property type="entry name" value="RNA_pol_N"/>
</dbReference>
<dbReference type="InterPro" id="IPR007080">
    <property type="entry name" value="RNA_pol_Rpb1_1"/>
</dbReference>
<dbReference type="InterPro" id="IPR007066">
    <property type="entry name" value="RNA_pol_Rpb1_3"/>
</dbReference>
<dbReference type="InterPro" id="IPR042102">
    <property type="entry name" value="RNA_pol_Rpb1_3_sf"/>
</dbReference>
<dbReference type="InterPro" id="IPR007083">
    <property type="entry name" value="RNA_pol_Rpb1_4"/>
</dbReference>
<dbReference type="InterPro" id="IPR007081">
    <property type="entry name" value="RNA_pol_Rpb1_5"/>
</dbReference>
<dbReference type="InterPro" id="IPR044893">
    <property type="entry name" value="RNA_pol_Rpb1_clamp_domain"/>
</dbReference>
<dbReference type="InterPro" id="IPR038120">
    <property type="entry name" value="Rpb1_funnel_sf"/>
</dbReference>
<dbReference type="NCBIfam" id="NF011498">
    <property type="entry name" value="PRK14906.1"/>
    <property type="match status" value="1"/>
</dbReference>
<dbReference type="NCBIfam" id="TIGR02386">
    <property type="entry name" value="rpoC_TIGR"/>
    <property type="match status" value="1"/>
</dbReference>
<dbReference type="PANTHER" id="PTHR19376">
    <property type="entry name" value="DNA-DIRECTED RNA POLYMERASE"/>
    <property type="match status" value="1"/>
</dbReference>
<dbReference type="PANTHER" id="PTHR19376:SF54">
    <property type="entry name" value="DNA-DIRECTED RNA POLYMERASE SUBUNIT BETA"/>
    <property type="match status" value="1"/>
</dbReference>
<dbReference type="Pfam" id="PF04997">
    <property type="entry name" value="RNA_pol_Rpb1_1"/>
    <property type="match status" value="1"/>
</dbReference>
<dbReference type="Pfam" id="PF00623">
    <property type="entry name" value="RNA_pol_Rpb1_2"/>
    <property type="match status" value="1"/>
</dbReference>
<dbReference type="Pfam" id="PF04983">
    <property type="entry name" value="RNA_pol_Rpb1_3"/>
    <property type="match status" value="1"/>
</dbReference>
<dbReference type="Pfam" id="PF05000">
    <property type="entry name" value="RNA_pol_Rpb1_4"/>
    <property type="match status" value="1"/>
</dbReference>
<dbReference type="Pfam" id="PF04998">
    <property type="entry name" value="RNA_pol_Rpb1_5"/>
    <property type="match status" value="1"/>
</dbReference>
<dbReference type="SMART" id="SM00663">
    <property type="entry name" value="RPOLA_N"/>
    <property type="match status" value="1"/>
</dbReference>
<dbReference type="SUPFAM" id="SSF64484">
    <property type="entry name" value="beta and beta-prime subunits of DNA dependent RNA-polymerase"/>
    <property type="match status" value="1"/>
</dbReference>
<reference key="1">
    <citation type="journal article" date="2007" name="Nat. Biotechnol.">
        <title>Complete genome sequence of the erythromycin-producing bacterium Saccharopolyspora erythraea NRRL23338.</title>
        <authorList>
            <person name="Oliynyk M."/>
            <person name="Samborskyy M."/>
            <person name="Lester J.B."/>
            <person name="Mironenko T."/>
            <person name="Scott N."/>
            <person name="Dickens S."/>
            <person name="Haydock S.F."/>
            <person name="Leadlay P.F."/>
        </authorList>
    </citation>
    <scope>NUCLEOTIDE SEQUENCE [LARGE SCALE GENOMIC DNA]</scope>
    <source>
        <strain>ATCC 11635 / DSM 40517 / JCM 4748 / NBRC 13426 / NCIMB 8594 / NRRL 2338</strain>
    </source>
</reference>
<accession>A4FPP2</accession>